<sequence length="305" mass="33897">MNYQTILEEIEKEIQALFVEGKVASYIPALANVNPNQFSMAIKMFDGQTFGVGEIDKKFSIQSISKVFTFTLALNYYGKELYKRVSHEPSGNPFNSLVQLEYENGIPRNPFINAGAIVTADTLVSIYKNDTFNQILDFIKMVSNDKTIDFNEEIFHSELEHGFRNYALINMIKSFGNIHNDIDEVIKTYFKQCSIMMSPSQLASSMLFLANHGINPITNERILTESKAKRISSLMLTCGHYDASGDFAYKVGLPGKSGVGGGIVAIVPKKMAICVYSPKLNTQGNSLIGTKALELFTTKTGLSIF</sequence>
<name>GLSA_ALIB4</name>
<proteinExistence type="inferred from homology"/>
<gene>
    <name evidence="1" type="primary">glsA</name>
    <name type="ordered locus">Abu_2331</name>
</gene>
<evidence type="ECO:0000255" key="1">
    <source>
        <dbReference type="HAMAP-Rule" id="MF_00313"/>
    </source>
</evidence>
<keyword id="KW-0378">Hydrolase</keyword>
<keyword id="KW-1185">Reference proteome</keyword>
<accession>A8EX66</accession>
<dbReference type="EC" id="3.5.1.2" evidence="1"/>
<dbReference type="EMBL" id="CP000361">
    <property type="protein sequence ID" value="ABV68539.1"/>
    <property type="molecule type" value="Genomic_DNA"/>
</dbReference>
<dbReference type="RefSeq" id="WP_012148151.1">
    <property type="nucleotide sequence ID" value="NC_009850.1"/>
</dbReference>
<dbReference type="SMR" id="A8EX66"/>
<dbReference type="STRING" id="367737.Abu_2331"/>
<dbReference type="GeneID" id="24305035"/>
<dbReference type="KEGG" id="abu:Abu_2331"/>
<dbReference type="eggNOG" id="COG2066">
    <property type="taxonomic scope" value="Bacteria"/>
</dbReference>
<dbReference type="HOGENOM" id="CLU_027932_1_1_7"/>
<dbReference type="Proteomes" id="UP000001136">
    <property type="component" value="Chromosome"/>
</dbReference>
<dbReference type="GO" id="GO:0004359">
    <property type="term" value="F:glutaminase activity"/>
    <property type="evidence" value="ECO:0007669"/>
    <property type="project" value="UniProtKB-UniRule"/>
</dbReference>
<dbReference type="GO" id="GO:0006537">
    <property type="term" value="P:glutamate biosynthetic process"/>
    <property type="evidence" value="ECO:0007669"/>
    <property type="project" value="TreeGrafter"/>
</dbReference>
<dbReference type="GO" id="GO:0006543">
    <property type="term" value="P:glutamine catabolic process"/>
    <property type="evidence" value="ECO:0007669"/>
    <property type="project" value="TreeGrafter"/>
</dbReference>
<dbReference type="FunFam" id="3.40.710.10:FF:000005">
    <property type="entry name" value="Glutaminase"/>
    <property type="match status" value="1"/>
</dbReference>
<dbReference type="Gene3D" id="3.40.710.10">
    <property type="entry name" value="DD-peptidase/beta-lactamase superfamily"/>
    <property type="match status" value="1"/>
</dbReference>
<dbReference type="HAMAP" id="MF_00313">
    <property type="entry name" value="Glutaminase"/>
    <property type="match status" value="1"/>
</dbReference>
<dbReference type="InterPro" id="IPR012338">
    <property type="entry name" value="Beta-lactam/transpept-like"/>
</dbReference>
<dbReference type="InterPro" id="IPR015868">
    <property type="entry name" value="Glutaminase"/>
</dbReference>
<dbReference type="NCBIfam" id="TIGR03814">
    <property type="entry name" value="Gln_ase"/>
    <property type="match status" value="1"/>
</dbReference>
<dbReference type="NCBIfam" id="NF002132">
    <property type="entry name" value="PRK00971.1-1"/>
    <property type="match status" value="1"/>
</dbReference>
<dbReference type="NCBIfam" id="NF002133">
    <property type="entry name" value="PRK00971.1-2"/>
    <property type="match status" value="1"/>
</dbReference>
<dbReference type="PANTHER" id="PTHR12544">
    <property type="entry name" value="GLUTAMINASE"/>
    <property type="match status" value="1"/>
</dbReference>
<dbReference type="PANTHER" id="PTHR12544:SF29">
    <property type="entry name" value="GLUTAMINASE"/>
    <property type="match status" value="1"/>
</dbReference>
<dbReference type="Pfam" id="PF04960">
    <property type="entry name" value="Glutaminase"/>
    <property type="match status" value="1"/>
</dbReference>
<dbReference type="SUPFAM" id="SSF56601">
    <property type="entry name" value="beta-lactamase/transpeptidase-like"/>
    <property type="match status" value="1"/>
</dbReference>
<feature type="chain" id="PRO_0000336023" description="Glutaminase">
    <location>
        <begin position="1"/>
        <end position="305"/>
    </location>
</feature>
<feature type="binding site" evidence="1">
    <location>
        <position position="63"/>
    </location>
    <ligand>
        <name>substrate</name>
    </ligand>
</feature>
<feature type="binding site" evidence="1">
    <location>
        <position position="113"/>
    </location>
    <ligand>
        <name>substrate</name>
    </ligand>
</feature>
<feature type="binding site" evidence="1">
    <location>
        <position position="158"/>
    </location>
    <ligand>
        <name>substrate</name>
    </ligand>
</feature>
<feature type="binding site" evidence="1">
    <location>
        <position position="165"/>
    </location>
    <ligand>
        <name>substrate</name>
    </ligand>
</feature>
<feature type="binding site" evidence="1">
    <location>
        <position position="189"/>
    </location>
    <ligand>
        <name>substrate</name>
    </ligand>
</feature>
<feature type="binding site" evidence="1">
    <location>
        <position position="241"/>
    </location>
    <ligand>
        <name>substrate</name>
    </ligand>
</feature>
<feature type="binding site" evidence="1">
    <location>
        <position position="259"/>
    </location>
    <ligand>
        <name>substrate</name>
    </ligand>
</feature>
<protein>
    <recommendedName>
        <fullName evidence="1">Glutaminase</fullName>
        <ecNumber evidence="1">3.5.1.2</ecNumber>
    </recommendedName>
</protein>
<reference key="1">
    <citation type="journal article" date="2007" name="PLoS ONE">
        <title>The complete genome sequence and analysis of the Epsilonproteobacterium Arcobacter butzleri.</title>
        <authorList>
            <person name="Miller W.G."/>
            <person name="Parker C.T."/>
            <person name="Rubenfield M."/>
            <person name="Mendz G.L."/>
            <person name="Woesten M.M.S.M."/>
            <person name="Ussery D.W."/>
            <person name="Stolz J.F."/>
            <person name="Binnewies T.T."/>
            <person name="Hallin P.F."/>
            <person name="Wang G."/>
            <person name="Malek J.A."/>
            <person name="Rogosin A."/>
            <person name="Stanker L.H."/>
            <person name="Mandrell R.E."/>
        </authorList>
    </citation>
    <scope>NUCLEOTIDE SEQUENCE [LARGE SCALE GENOMIC DNA]</scope>
    <source>
        <strain>RM4018</strain>
    </source>
</reference>
<organism>
    <name type="scientific">Aliarcobacter butzleri (strain RM4018)</name>
    <name type="common">Arcobacter butzleri</name>
    <dbReference type="NCBI Taxonomy" id="367737"/>
    <lineage>
        <taxon>Bacteria</taxon>
        <taxon>Pseudomonadati</taxon>
        <taxon>Campylobacterota</taxon>
        <taxon>Epsilonproteobacteria</taxon>
        <taxon>Campylobacterales</taxon>
        <taxon>Arcobacteraceae</taxon>
        <taxon>Aliarcobacter</taxon>
    </lineage>
</organism>
<comment type="catalytic activity">
    <reaction evidence="1">
        <text>L-glutamine + H2O = L-glutamate + NH4(+)</text>
        <dbReference type="Rhea" id="RHEA:15889"/>
        <dbReference type="ChEBI" id="CHEBI:15377"/>
        <dbReference type="ChEBI" id="CHEBI:28938"/>
        <dbReference type="ChEBI" id="CHEBI:29985"/>
        <dbReference type="ChEBI" id="CHEBI:58359"/>
        <dbReference type="EC" id="3.5.1.2"/>
    </reaction>
</comment>
<comment type="subunit">
    <text evidence="1">Homotetramer.</text>
</comment>
<comment type="similarity">
    <text evidence="1">Belongs to the glutaminase family.</text>
</comment>